<protein>
    <recommendedName>
        <fullName evidence="1">Translational regulator CsrA</fullName>
    </recommendedName>
    <alternativeName>
        <fullName evidence="1">Carbon storage regulator</fullName>
    </alternativeName>
</protein>
<feature type="chain" id="PRO_1000023416" description="Translational regulator CsrA">
    <location>
        <begin position="1"/>
        <end position="65"/>
    </location>
</feature>
<sequence>MLILTRRVGETLMIGDEVTVTVLGVKGNQVRIGVNAPKEVSVHREEIYQRIQSEKSGTPSEGGNF</sequence>
<evidence type="ECO:0000255" key="1">
    <source>
        <dbReference type="HAMAP-Rule" id="MF_00167"/>
    </source>
</evidence>
<accession>A3D781</accession>
<organism>
    <name type="scientific">Shewanella baltica (strain OS155 / ATCC BAA-1091)</name>
    <dbReference type="NCBI Taxonomy" id="325240"/>
    <lineage>
        <taxon>Bacteria</taxon>
        <taxon>Pseudomonadati</taxon>
        <taxon>Pseudomonadota</taxon>
        <taxon>Gammaproteobacteria</taxon>
        <taxon>Alteromonadales</taxon>
        <taxon>Shewanellaceae</taxon>
        <taxon>Shewanella</taxon>
    </lineage>
</organism>
<proteinExistence type="inferred from homology"/>
<dbReference type="EMBL" id="CP000563">
    <property type="protein sequence ID" value="ABN62594.1"/>
    <property type="molecule type" value="Genomic_DNA"/>
</dbReference>
<dbReference type="RefSeq" id="WP_006082602.1">
    <property type="nucleotide sequence ID" value="NC_009052.1"/>
</dbReference>
<dbReference type="SMR" id="A3D781"/>
<dbReference type="STRING" id="325240.Sbal_3113"/>
<dbReference type="GeneID" id="94727129"/>
<dbReference type="KEGG" id="sbl:Sbal_3113"/>
<dbReference type="HOGENOM" id="CLU_164837_2_2_6"/>
<dbReference type="OrthoDB" id="9809061at2"/>
<dbReference type="Proteomes" id="UP000001557">
    <property type="component" value="Chromosome"/>
</dbReference>
<dbReference type="GO" id="GO:0005829">
    <property type="term" value="C:cytosol"/>
    <property type="evidence" value="ECO:0007669"/>
    <property type="project" value="TreeGrafter"/>
</dbReference>
<dbReference type="GO" id="GO:0048027">
    <property type="term" value="F:mRNA 5'-UTR binding"/>
    <property type="evidence" value="ECO:0007669"/>
    <property type="project" value="UniProtKB-UniRule"/>
</dbReference>
<dbReference type="GO" id="GO:0006402">
    <property type="term" value="P:mRNA catabolic process"/>
    <property type="evidence" value="ECO:0007669"/>
    <property type="project" value="InterPro"/>
</dbReference>
<dbReference type="GO" id="GO:0045947">
    <property type="term" value="P:negative regulation of translational initiation"/>
    <property type="evidence" value="ECO:0007669"/>
    <property type="project" value="UniProtKB-UniRule"/>
</dbReference>
<dbReference type="GO" id="GO:0045948">
    <property type="term" value="P:positive regulation of translational initiation"/>
    <property type="evidence" value="ECO:0007669"/>
    <property type="project" value="UniProtKB-UniRule"/>
</dbReference>
<dbReference type="GO" id="GO:0006109">
    <property type="term" value="P:regulation of carbohydrate metabolic process"/>
    <property type="evidence" value="ECO:0007669"/>
    <property type="project" value="UniProtKB-UniRule"/>
</dbReference>
<dbReference type="FunFam" id="2.60.40.4380:FF:000001">
    <property type="entry name" value="Translational regulator CsrA"/>
    <property type="match status" value="1"/>
</dbReference>
<dbReference type="Gene3D" id="2.60.40.4380">
    <property type="entry name" value="Translational regulator CsrA"/>
    <property type="match status" value="1"/>
</dbReference>
<dbReference type="HAMAP" id="MF_00167">
    <property type="entry name" value="CsrA"/>
    <property type="match status" value="1"/>
</dbReference>
<dbReference type="InterPro" id="IPR003751">
    <property type="entry name" value="CsrA"/>
</dbReference>
<dbReference type="InterPro" id="IPR036107">
    <property type="entry name" value="CsrA_sf"/>
</dbReference>
<dbReference type="NCBIfam" id="TIGR00202">
    <property type="entry name" value="csrA"/>
    <property type="match status" value="1"/>
</dbReference>
<dbReference type="NCBIfam" id="NF002469">
    <property type="entry name" value="PRK01712.1"/>
    <property type="match status" value="1"/>
</dbReference>
<dbReference type="PANTHER" id="PTHR34984">
    <property type="entry name" value="CARBON STORAGE REGULATOR"/>
    <property type="match status" value="1"/>
</dbReference>
<dbReference type="PANTHER" id="PTHR34984:SF1">
    <property type="entry name" value="CARBON STORAGE REGULATOR"/>
    <property type="match status" value="1"/>
</dbReference>
<dbReference type="Pfam" id="PF02599">
    <property type="entry name" value="CsrA"/>
    <property type="match status" value="1"/>
</dbReference>
<dbReference type="SUPFAM" id="SSF117130">
    <property type="entry name" value="CsrA-like"/>
    <property type="match status" value="1"/>
</dbReference>
<name>CSRA_SHEB5</name>
<comment type="function">
    <text evidence="1">A key translational regulator that binds mRNA to regulate translation initiation and/or mRNA stability. Mediates global changes in gene expression, shifting from rapid growth to stress survival by linking envelope stress, the stringent response and the catabolite repression systems. Usually binds in the 5'-UTR; binding at or near the Shine-Dalgarno sequence prevents ribosome-binding, repressing translation, binding elsewhere in the 5'-UTR can activate translation and/or stabilize the mRNA. Its function is antagonized by small RNA(s).</text>
</comment>
<comment type="subunit">
    <text evidence="1">Homodimer; the beta-strands of each monomer intercalate to form a hydrophobic core, while the alpha-helices form wings that extend away from the core.</text>
</comment>
<comment type="subcellular location">
    <subcellularLocation>
        <location evidence="1">Cytoplasm</location>
    </subcellularLocation>
</comment>
<comment type="similarity">
    <text evidence="1">Belongs to the CsrA/RsmA family.</text>
</comment>
<keyword id="KW-0010">Activator</keyword>
<keyword id="KW-0963">Cytoplasm</keyword>
<keyword id="KW-1185">Reference proteome</keyword>
<keyword id="KW-0678">Repressor</keyword>
<keyword id="KW-0694">RNA-binding</keyword>
<keyword id="KW-0810">Translation regulation</keyword>
<reference key="1">
    <citation type="submission" date="2007-02" db="EMBL/GenBank/DDBJ databases">
        <title>Complete sequence of chromosome of Shewanella baltica OS155.</title>
        <authorList>
            <consortium name="US DOE Joint Genome Institute"/>
            <person name="Copeland A."/>
            <person name="Lucas S."/>
            <person name="Lapidus A."/>
            <person name="Barry K."/>
            <person name="Detter J.C."/>
            <person name="Glavina del Rio T."/>
            <person name="Hammon N."/>
            <person name="Israni S."/>
            <person name="Dalin E."/>
            <person name="Tice H."/>
            <person name="Pitluck S."/>
            <person name="Sims D.R."/>
            <person name="Brettin T."/>
            <person name="Bruce D."/>
            <person name="Han C."/>
            <person name="Tapia R."/>
            <person name="Brainard J."/>
            <person name="Schmutz J."/>
            <person name="Larimer F."/>
            <person name="Land M."/>
            <person name="Hauser L."/>
            <person name="Kyrpides N."/>
            <person name="Mikhailova N."/>
            <person name="Brettar I."/>
            <person name="Klappenbach J."/>
            <person name="Konstantinidis K."/>
            <person name="Rodrigues J."/>
            <person name="Tiedje J."/>
            <person name="Richardson P."/>
        </authorList>
    </citation>
    <scope>NUCLEOTIDE SEQUENCE [LARGE SCALE GENOMIC DNA]</scope>
    <source>
        <strain>OS155 / ATCC BAA-1091</strain>
    </source>
</reference>
<gene>
    <name evidence="1" type="primary">csrA</name>
    <name type="ordered locus">Sbal_3113</name>
</gene>